<dbReference type="EC" id="5.4.3.8" evidence="1"/>
<dbReference type="EMBL" id="CP000038">
    <property type="protein sequence ID" value="AAZ86959.1"/>
    <property type="molecule type" value="Genomic_DNA"/>
</dbReference>
<dbReference type="RefSeq" id="WP_000045275.1">
    <property type="nucleotide sequence ID" value="NC_007384.1"/>
</dbReference>
<dbReference type="SMR" id="Q3Z5K3"/>
<dbReference type="GeneID" id="93777273"/>
<dbReference type="KEGG" id="ssn:SSON_0166"/>
<dbReference type="HOGENOM" id="CLU_016922_1_5_6"/>
<dbReference type="UniPathway" id="UPA00251">
    <property type="reaction ID" value="UER00317"/>
</dbReference>
<dbReference type="Proteomes" id="UP000002529">
    <property type="component" value="Chromosome"/>
</dbReference>
<dbReference type="GO" id="GO:0005737">
    <property type="term" value="C:cytoplasm"/>
    <property type="evidence" value="ECO:0007669"/>
    <property type="project" value="UniProtKB-SubCell"/>
</dbReference>
<dbReference type="GO" id="GO:0042286">
    <property type="term" value="F:glutamate-1-semialdehyde 2,1-aminomutase activity"/>
    <property type="evidence" value="ECO:0007669"/>
    <property type="project" value="UniProtKB-UniRule"/>
</dbReference>
<dbReference type="GO" id="GO:0030170">
    <property type="term" value="F:pyridoxal phosphate binding"/>
    <property type="evidence" value="ECO:0007669"/>
    <property type="project" value="InterPro"/>
</dbReference>
<dbReference type="GO" id="GO:0008483">
    <property type="term" value="F:transaminase activity"/>
    <property type="evidence" value="ECO:0007669"/>
    <property type="project" value="InterPro"/>
</dbReference>
<dbReference type="GO" id="GO:0006782">
    <property type="term" value="P:protoporphyrinogen IX biosynthetic process"/>
    <property type="evidence" value="ECO:0007669"/>
    <property type="project" value="UniProtKB-UniRule"/>
</dbReference>
<dbReference type="CDD" id="cd00610">
    <property type="entry name" value="OAT_like"/>
    <property type="match status" value="1"/>
</dbReference>
<dbReference type="FunFam" id="3.40.640.10:FF:000021">
    <property type="entry name" value="Glutamate-1-semialdehyde 2,1-aminomutase"/>
    <property type="match status" value="1"/>
</dbReference>
<dbReference type="FunFam" id="3.90.1150.10:FF:000012">
    <property type="entry name" value="Glutamate-1-semialdehyde 2,1-aminomutase"/>
    <property type="match status" value="1"/>
</dbReference>
<dbReference type="Gene3D" id="3.90.1150.10">
    <property type="entry name" value="Aspartate Aminotransferase, domain 1"/>
    <property type="match status" value="1"/>
</dbReference>
<dbReference type="Gene3D" id="3.40.640.10">
    <property type="entry name" value="Type I PLP-dependent aspartate aminotransferase-like (Major domain)"/>
    <property type="match status" value="1"/>
</dbReference>
<dbReference type="HAMAP" id="MF_00375">
    <property type="entry name" value="HemL_aminotrans_3"/>
    <property type="match status" value="1"/>
</dbReference>
<dbReference type="InterPro" id="IPR004639">
    <property type="entry name" value="4pyrrol_synth_GluAld_NH2Trfase"/>
</dbReference>
<dbReference type="InterPro" id="IPR005814">
    <property type="entry name" value="Aminotrans_3"/>
</dbReference>
<dbReference type="InterPro" id="IPR049704">
    <property type="entry name" value="Aminotrans_3_PPA_site"/>
</dbReference>
<dbReference type="InterPro" id="IPR015424">
    <property type="entry name" value="PyrdxlP-dep_Trfase"/>
</dbReference>
<dbReference type="InterPro" id="IPR015421">
    <property type="entry name" value="PyrdxlP-dep_Trfase_major"/>
</dbReference>
<dbReference type="InterPro" id="IPR015422">
    <property type="entry name" value="PyrdxlP-dep_Trfase_small"/>
</dbReference>
<dbReference type="NCBIfam" id="TIGR00713">
    <property type="entry name" value="hemL"/>
    <property type="match status" value="1"/>
</dbReference>
<dbReference type="NCBIfam" id="NF000818">
    <property type="entry name" value="PRK00062.1"/>
    <property type="match status" value="1"/>
</dbReference>
<dbReference type="PANTHER" id="PTHR43713">
    <property type="entry name" value="GLUTAMATE-1-SEMIALDEHYDE 2,1-AMINOMUTASE"/>
    <property type="match status" value="1"/>
</dbReference>
<dbReference type="PANTHER" id="PTHR43713:SF3">
    <property type="entry name" value="GLUTAMATE-1-SEMIALDEHYDE 2,1-AMINOMUTASE 1, CHLOROPLASTIC-RELATED"/>
    <property type="match status" value="1"/>
</dbReference>
<dbReference type="Pfam" id="PF00202">
    <property type="entry name" value="Aminotran_3"/>
    <property type="match status" value="1"/>
</dbReference>
<dbReference type="SUPFAM" id="SSF53383">
    <property type="entry name" value="PLP-dependent transferases"/>
    <property type="match status" value="1"/>
</dbReference>
<dbReference type="PROSITE" id="PS00600">
    <property type="entry name" value="AA_TRANSFER_CLASS_3"/>
    <property type="match status" value="1"/>
</dbReference>
<feature type="chain" id="PRO_0000243617" description="Glutamate-1-semialdehyde 2,1-aminomutase">
    <location>
        <begin position="1"/>
        <end position="426"/>
    </location>
</feature>
<feature type="modified residue" description="N6-(pyridoxal phosphate)lysine" evidence="1">
    <location>
        <position position="265"/>
    </location>
</feature>
<name>GSA_SHISS</name>
<sequence>MSKSENLYSAARELIPGGVNSPVRAFTGVGGTPLFIEKADGAYLYDVDGKAYIDYVGSWGPMVLGHNHPAIRNAVIEAAERGLSFGAPTEMEVKMAQLVTELVPTMDMVRMVNSGTEATMSAIRLARGFTGRDKIIKFEGCYHGHADCLLVKAGSGALTLGQPNSPGVPADFAKHTLTCTYNDLASVRAAFEQYPQEIACIIIEPVAGNMNCVPPLPDFLPGLRALCDEFGALLIIDEVMTGFRVALAGAQDYYGVEPDLTCLGKIIGGGMPVGAFGGRRDVMDALAPTGPVYQAGTLSGNPIAMAAGFACLNEVAQPGVHETLDELTTRLAEGLLEAAEEAGIPLVVNHVGGMFGIFFTDAESVTCYQDVMACDVERFKRFFHMMLDEGVYLAPSAFEAGFMSVAHSMEDINNTIDAARRVFAKL</sequence>
<accession>Q3Z5K3</accession>
<reference key="1">
    <citation type="journal article" date="2005" name="Nucleic Acids Res.">
        <title>Genome dynamics and diversity of Shigella species, the etiologic agents of bacillary dysentery.</title>
        <authorList>
            <person name="Yang F."/>
            <person name="Yang J."/>
            <person name="Zhang X."/>
            <person name="Chen L."/>
            <person name="Jiang Y."/>
            <person name="Yan Y."/>
            <person name="Tang X."/>
            <person name="Wang J."/>
            <person name="Xiong Z."/>
            <person name="Dong J."/>
            <person name="Xue Y."/>
            <person name="Zhu Y."/>
            <person name="Xu X."/>
            <person name="Sun L."/>
            <person name="Chen S."/>
            <person name="Nie H."/>
            <person name="Peng J."/>
            <person name="Xu J."/>
            <person name="Wang Y."/>
            <person name="Yuan Z."/>
            <person name="Wen Y."/>
            <person name="Yao Z."/>
            <person name="Shen Y."/>
            <person name="Qiang B."/>
            <person name="Hou Y."/>
            <person name="Yu J."/>
            <person name="Jin Q."/>
        </authorList>
    </citation>
    <scope>NUCLEOTIDE SEQUENCE [LARGE SCALE GENOMIC DNA]</scope>
    <source>
        <strain>Ss046</strain>
    </source>
</reference>
<organism>
    <name type="scientific">Shigella sonnei (strain Ss046)</name>
    <dbReference type="NCBI Taxonomy" id="300269"/>
    <lineage>
        <taxon>Bacteria</taxon>
        <taxon>Pseudomonadati</taxon>
        <taxon>Pseudomonadota</taxon>
        <taxon>Gammaproteobacteria</taxon>
        <taxon>Enterobacterales</taxon>
        <taxon>Enterobacteriaceae</taxon>
        <taxon>Shigella</taxon>
    </lineage>
</organism>
<gene>
    <name evidence="1" type="primary">hemL</name>
    <name type="ordered locus">SSON_0166</name>
</gene>
<comment type="catalytic activity">
    <reaction evidence="1">
        <text>(S)-4-amino-5-oxopentanoate = 5-aminolevulinate</text>
        <dbReference type="Rhea" id="RHEA:14265"/>
        <dbReference type="ChEBI" id="CHEBI:57501"/>
        <dbReference type="ChEBI" id="CHEBI:356416"/>
        <dbReference type="EC" id="5.4.3.8"/>
    </reaction>
</comment>
<comment type="cofactor">
    <cofactor evidence="1">
        <name>pyridoxal 5'-phosphate</name>
        <dbReference type="ChEBI" id="CHEBI:597326"/>
    </cofactor>
</comment>
<comment type="pathway">
    <text evidence="1">Porphyrin-containing compound metabolism; protoporphyrin-IX biosynthesis; 5-aminolevulinate from L-glutamyl-tRNA(Glu): step 2/2.</text>
</comment>
<comment type="subunit">
    <text evidence="1">Homodimer.</text>
</comment>
<comment type="subcellular location">
    <subcellularLocation>
        <location evidence="1">Cytoplasm</location>
    </subcellularLocation>
</comment>
<comment type="similarity">
    <text evidence="1">Belongs to the class-III pyridoxal-phosphate-dependent aminotransferase family. HemL subfamily.</text>
</comment>
<protein>
    <recommendedName>
        <fullName evidence="1">Glutamate-1-semialdehyde 2,1-aminomutase</fullName>
        <shortName evidence="1">GSA</shortName>
        <ecNumber evidence="1">5.4.3.8</ecNumber>
    </recommendedName>
    <alternativeName>
        <fullName evidence="1">Glutamate-1-semialdehyde aminotransferase</fullName>
        <shortName evidence="1">GSA-AT</shortName>
    </alternativeName>
</protein>
<keyword id="KW-0963">Cytoplasm</keyword>
<keyword id="KW-0413">Isomerase</keyword>
<keyword id="KW-0627">Porphyrin biosynthesis</keyword>
<keyword id="KW-0663">Pyridoxal phosphate</keyword>
<keyword id="KW-1185">Reference proteome</keyword>
<proteinExistence type="inferred from homology"/>
<evidence type="ECO:0000255" key="1">
    <source>
        <dbReference type="HAMAP-Rule" id="MF_00375"/>
    </source>
</evidence>